<name>LHDAG_HDVU2</name>
<evidence type="ECO:0000250" key="1"/>
<evidence type="ECO:0000250" key="2">
    <source>
        <dbReference type="UniProtKB" id="P0C6L3"/>
    </source>
</evidence>
<evidence type="ECO:0000250" key="3">
    <source>
        <dbReference type="UniProtKB" id="P29996"/>
    </source>
</evidence>
<evidence type="ECO:0000255" key="4"/>
<evidence type="ECO:0000255" key="5">
    <source>
        <dbReference type="PROSITE-ProRule" id="PRU01183"/>
    </source>
</evidence>
<evidence type="ECO:0000256" key="6">
    <source>
        <dbReference type="SAM" id="MobiDB-lite"/>
    </source>
</evidence>
<evidence type="ECO:0000269" key="7">
    <source>
    </source>
</evidence>
<evidence type="ECO:0000269" key="8">
    <source>
    </source>
</evidence>
<evidence type="ECO:0000269" key="9">
    <source>
    </source>
</evidence>
<evidence type="ECO:0000305" key="10"/>
<sequence length="214" mass="24245">MSRSESKKNRGGREEILEQWVGARKKLEELERDLRKIKKKIKKLEEENPWLGNIKGILGKKDREGEGAPPAKRARADQMEVDSGPRKRPFRGEFTDKERRDHRRRKALENKRKQLSSGGKSLSKEEEEELRKLTEEDERRERRVAGPRVGGVNPLEGGTRGAPGGGFVPSMQGVPESPFARTGEGLDVRGNQGFPWDILFPADPPFSPQSCRPQ</sequence>
<protein>
    <recommendedName>
        <fullName>Large delta antigen</fullName>
        <shortName>L-HDAg</shortName>
    </recommendedName>
    <alternativeName>
        <fullName>p27</fullName>
    </alternativeName>
</protein>
<proteinExistence type="inferred from homology"/>
<dbReference type="EMBL" id="L22066">
    <property type="protein sequence ID" value="AAB02593.1"/>
    <property type="molecule type" value="Genomic_RNA"/>
</dbReference>
<dbReference type="SMR" id="P0C6M5"/>
<dbReference type="Proteomes" id="UP000008235">
    <property type="component" value="Genome"/>
</dbReference>
<dbReference type="GO" id="GO:0043657">
    <property type="term" value="C:host cell"/>
    <property type="evidence" value="ECO:0007669"/>
    <property type="project" value="GOC"/>
</dbReference>
<dbReference type="GO" id="GO:0044196">
    <property type="term" value="C:host cell nucleolus"/>
    <property type="evidence" value="ECO:0007669"/>
    <property type="project" value="UniProtKB-SubCell"/>
</dbReference>
<dbReference type="GO" id="GO:0044423">
    <property type="term" value="C:virion component"/>
    <property type="evidence" value="ECO:0007669"/>
    <property type="project" value="UniProtKB-KW"/>
</dbReference>
<dbReference type="GO" id="GO:0003723">
    <property type="term" value="F:RNA binding"/>
    <property type="evidence" value="ECO:0007669"/>
    <property type="project" value="UniProtKB-KW"/>
</dbReference>
<dbReference type="GO" id="GO:0046718">
    <property type="term" value="P:symbiont entry into host cell"/>
    <property type="evidence" value="ECO:0007669"/>
    <property type="project" value="UniProtKB-KW"/>
</dbReference>
<dbReference type="GO" id="GO:0075732">
    <property type="term" value="P:viral penetration into host nucleus"/>
    <property type="evidence" value="ECO:0007669"/>
    <property type="project" value="UniProtKB-KW"/>
</dbReference>
<dbReference type="Gene3D" id="4.10.220.40">
    <property type="entry name" value="Delta antigen, N-terminal"/>
    <property type="match status" value="1"/>
</dbReference>
<dbReference type="InterPro" id="IPR027403">
    <property type="entry name" value="Delta_antigen_N"/>
</dbReference>
<dbReference type="InterPro" id="IPR037517">
    <property type="entry name" value="HDAG_dom"/>
</dbReference>
<dbReference type="InterPro" id="IPR002506">
    <property type="entry name" value="HDV_ag"/>
</dbReference>
<dbReference type="Pfam" id="PF01517">
    <property type="entry name" value="HDV_ag"/>
    <property type="match status" value="1"/>
</dbReference>
<dbReference type="SUPFAM" id="SSF58108">
    <property type="entry name" value="Oligomerization domain of hepatitis delta antigen"/>
    <property type="match status" value="1"/>
</dbReference>
<dbReference type="PROSITE" id="PS51838">
    <property type="entry name" value="HDAG"/>
    <property type="match status" value="1"/>
</dbReference>
<feature type="chain" id="PRO_0000038150" description="Large delta antigen">
    <location>
        <begin position="1"/>
        <end position="211"/>
    </location>
</feature>
<feature type="propeptide" id="PRO_0000396677" description="Removed in mature form" evidence="3">
    <location>
        <begin position="212"/>
        <end position="214"/>
    </location>
</feature>
<feature type="domain" description="HDAg" evidence="5">
    <location>
        <begin position="20"/>
        <end position="195"/>
    </location>
</feature>
<feature type="region of interest" description="Dimerization" evidence="4">
    <location>
        <begin position="12"/>
        <end position="60"/>
    </location>
</feature>
<feature type="region of interest" description="Disordered" evidence="6">
    <location>
        <begin position="52"/>
        <end position="214"/>
    </location>
</feature>
<feature type="region of interest" description="RNA-binding" evidence="5">
    <location>
        <begin position="97"/>
        <end position="107"/>
    </location>
</feature>
<feature type="region of interest" description="RNAPII-binding" evidence="5">
    <location>
        <begin position="130"/>
        <end position="195"/>
    </location>
</feature>
<feature type="region of interest" description="RNA-binding" evidence="5">
    <location>
        <begin position="136"/>
        <end position="146"/>
    </location>
</feature>
<feature type="short sequence motif" description="Nuclear localization signal" evidence="3">
    <location>
        <begin position="66"/>
        <end position="75"/>
    </location>
</feature>
<feature type="compositionally biased region" description="Basic and acidic residues" evidence="6">
    <location>
        <begin position="90"/>
        <end position="99"/>
    </location>
</feature>
<feature type="compositionally biased region" description="Basic and acidic residues" evidence="6">
    <location>
        <begin position="129"/>
        <end position="144"/>
    </location>
</feature>
<feature type="compositionally biased region" description="Gly residues" evidence="6">
    <location>
        <begin position="158"/>
        <end position="167"/>
    </location>
</feature>
<feature type="modified residue" description="Phosphoserine; by host" evidence="3">
    <location>
        <position position="2"/>
    </location>
</feature>
<feature type="modified residue" description="Omega-N-methylated arginine; by host" evidence="2">
    <location>
        <position position="13"/>
    </location>
</feature>
<feature type="modified residue" description="N6-acetyllysine; by host" evidence="2">
    <location>
        <position position="72"/>
    </location>
</feature>
<feature type="modified residue" description="Phosphoserine; by host" evidence="3">
    <location>
        <position position="123"/>
    </location>
</feature>
<feature type="modified residue" description="Phosphoserine; by host" evidence="3">
    <location>
        <position position="177"/>
    </location>
</feature>
<feature type="modified residue" description="Cysteine methyl ester; by host" evidence="3">
    <location>
        <position position="211"/>
    </location>
</feature>
<feature type="lipid moiety-binding region" description="S-farnesyl cysteine; by host" evidence="3">
    <location>
        <position position="211"/>
    </location>
</feature>
<organismHost>
    <name type="scientific">Homo sapiens</name>
    <name type="common">Human</name>
    <dbReference type="NCBI Taxonomy" id="9606"/>
</organismHost>
<keyword id="KW-0007">Acetylation</keyword>
<keyword id="KW-1048">Host nucleus</keyword>
<keyword id="KW-0449">Lipoprotein</keyword>
<keyword id="KW-0488">Methylation</keyword>
<keyword id="KW-0597">Phosphoprotein</keyword>
<keyword id="KW-0636">Prenylation</keyword>
<keyword id="KW-0691">RNA editing</keyword>
<keyword id="KW-0694">RNA-binding</keyword>
<keyword id="KW-1163">Viral penetration into host nucleus</keyword>
<keyword id="KW-0946">Virion</keyword>
<keyword id="KW-1160">Virus entry into host cell</keyword>
<reference key="1">
    <citation type="journal article" date="1993" name="Proc. Natl. Acad. Sci. U.S.A.">
        <title>A genotype of hepatitis D virus that occurs in northern South America.</title>
        <authorList>
            <person name="Casey J.L."/>
            <person name="Brown T.L."/>
            <person name="Colan E.J."/>
            <person name="Wignall F.S."/>
            <person name="Gerin J.L."/>
        </authorList>
    </citation>
    <scope>NUCLEOTIDE SEQUENCE [GENOMIC RNA]</scope>
    <scope>RNA EDITING</scope>
</reference>
<reference key="2">
    <citation type="journal article" date="1995" name="J. Virol.">
        <title>Hepatitis D virus RNA editing: specific modification of adenosine in the antigenomic RNA.</title>
        <authorList>
            <person name="Casey J.L."/>
            <person name="Gerin J.L."/>
        </authorList>
    </citation>
    <scope>RNA EDITING</scope>
</reference>
<reference key="3">
    <citation type="journal article" date="1998" name="Mol. Cell. Biol.">
        <title>Hepatitis delta virus RNA editing is highly specific for the amber/W site and is suppressed by hepatitis delta antigen.</title>
        <authorList>
            <person name="Polson A.G."/>
            <person name="Ley H.L. III"/>
            <person name="Bass B.L."/>
            <person name="Casey J.L."/>
        </authorList>
    </citation>
    <scope>RNA EDITING</scope>
</reference>
<reference key="4">
    <citation type="journal article" date="2005" name="Acta Virol.">
        <title>Hepatitis D.</title>
        <authorList>
            <person name="Husa P."/>
            <person name="Linhartova A."/>
            <person name="Nemecek V."/>
            <person name="Husova L."/>
        </authorList>
    </citation>
    <scope>REVIEW</scope>
</reference>
<reference key="5">
    <citation type="journal article" date="2006" name="Curr. Top. Microbiol. Immunol.">
        <title>Post-translational modification of delta antigen of hepatitis D virus.</title>
        <authorList>
            <person name="Huang W.H."/>
            <person name="Chen C.W."/>
            <person name="Wu H.L."/>
            <person name="Chen P.J."/>
        </authorList>
    </citation>
    <scope>REVIEW</scope>
</reference>
<organism>
    <name type="scientific">Hepatitis delta virus genotype I (isolate US-2)</name>
    <name type="common">HDV</name>
    <dbReference type="NCBI Taxonomy" id="261991"/>
    <lineage>
        <taxon>Viruses</taxon>
        <taxon>Ribozyviria</taxon>
        <taxon>Kolmioviridae</taxon>
        <taxon>Deltavirus</taxon>
        <taxon>Hepatitis delta virus</taxon>
    </lineage>
</organism>
<comment type="function">
    <text evidence="1">Following virus entry into host cell, provides nuclear import of HDV RNPs thanks to its nuclear localization signal. Needs co-infection with hepatitis B virus to provide surface proteins, otherwise there is no packaging or budding. Packages the HDV ribonucleoprotein in hepatitis B virus empty particles. Interacts with both HDV genomic RNA and cytoplasmic tail of HBsAg. May inhibit viral RNA replication (By similarity).</text>
</comment>
<comment type="subunit">
    <text evidence="1">Homodimer. Homooctamer. Interacts with HBV HBsAg. May interact with clathrin to induce virion budding (By similarity).</text>
</comment>
<comment type="subcellular location">
    <subcellularLocation>
        <location>Virion</location>
    </subcellularLocation>
    <subcellularLocation>
        <location>Host nucleus</location>
        <location>Host nucleolus</location>
    </subcellularLocation>
    <text evidence="1">isoprenylated in the cytoplasm, and translocates in the nucleus possibly after phosphorylation. Translocates after to nuclear speckle, then to the ER membrane where interaction with Hepatitis B virus antigene takes place (By similarity).</text>
</comment>
<comment type="PTM">
    <text evidence="1">Prenylated by host farnesyl-transferase in the cytoplasm prior to nucleus translocation.</text>
</comment>
<comment type="PTM">
    <text evidence="1">Phosphorylated at serines by host CK2 and other kinases. phosphorylation does not seem to be important for its function (By similarity).</text>
</comment>
<comment type="RNA editing">
    <location>
        <position position="196" evidence="7 8 9"/>
    </location>
    <text evidence="1">Partially edited. RNA editing at this position occurs on the antigenomic strand and consists of a conversion of A to G catalyzed by the cellular enzyme ADAR1. The unedited RNA version gives rise to the small delta antigen (AC Q81835), which ends with a nonsense codon at position 196. In the edited version, this amber codon is modified to a tryptophan codon and gives rise to the large delta antigen protein. S-HDAg suppresses editing of non-replicating antigenomic RNA, thereby regulating the extent of editing (By similarity).</text>
</comment>
<comment type="miscellaneous">
    <text>This strain belongs to the genotype I found in North America, Europe, Africa, East and West Asia and the South Pacific.</text>
</comment>
<comment type="similarity">
    <text evidence="10">Belongs to the hepatitis delta antigen family.</text>
</comment>
<accession>P0C6M5</accession>